<gene>
    <name evidence="1" type="primary">trpD</name>
    <name type="ordered locus">Rfer_3602</name>
</gene>
<evidence type="ECO:0000255" key="1">
    <source>
        <dbReference type="HAMAP-Rule" id="MF_00211"/>
    </source>
</evidence>
<organism>
    <name type="scientific">Albidiferax ferrireducens (strain ATCC BAA-621 / DSM 15236 / T118)</name>
    <name type="common">Rhodoferax ferrireducens</name>
    <dbReference type="NCBI Taxonomy" id="338969"/>
    <lineage>
        <taxon>Bacteria</taxon>
        <taxon>Pseudomonadati</taxon>
        <taxon>Pseudomonadota</taxon>
        <taxon>Betaproteobacteria</taxon>
        <taxon>Burkholderiales</taxon>
        <taxon>Comamonadaceae</taxon>
        <taxon>Rhodoferax</taxon>
    </lineage>
</organism>
<name>TRPD_ALBFT</name>
<accession>Q21SE7</accession>
<sequence length="350" mass="37024">MPNTHKITPQEALLRTIEHREIFHDEMLHIMRGIMTGEWSPVMMAALITGLRVKKETIGEITAAAQVMREFSTKVNVADTSHLVDIVGTGGDGSHTFNISTCAMFVAAAAGARVSKHGGRSVSSKSGSADVMESLGVNINLSPEAIAQCIEQVGVGFMFAPNHHPAMKNVAPVRKELGIKTIFNLLGPLTNPAGAPNILMGVFHPDLVGIQVRALQRLGAEHAVVVYGKDGMDEVSLGATTLVGELKHGEITEYEIHPEDFGMVMASNRALKVETPEQSKTMLQGVLDNAAGAPKDIVILNAGVALYAANVVPTMSAGIDKARVAIESGAARAKLAQLVSMSQQLKGAAK</sequence>
<protein>
    <recommendedName>
        <fullName evidence="1">Anthranilate phosphoribosyltransferase</fullName>
        <ecNumber evidence="1">2.4.2.18</ecNumber>
    </recommendedName>
</protein>
<keyword id="KW-0028">Amino-acid biosynthesis</keyword>
<keyword id="KW-0057">Aromatic amino acid biosynthesis</keyword>
<keyword id="KW-0328">Glycosyltransferase</keyword>
<keyword id="KW-0460">Magnesium</keyword>
<keyword id="KW-0479">Metal-binding</keyword>
<keyword id="KW-1185">Reference proteome</keyword>
<keyword id="KW-0808">Transferase</keyword>
<keyword id="KW-0822">Tryptophan biosynthesis</keyword>
<reference key="1">
    <citation type="submission" date="2006-02" db="EMBL/GenBank/DDBJ databases">
        <title>Complete sequence of chromosome of Rhodoferax ferrireducens DSM 15236.</title>
        <authorList>
            <person name="Copeland A."/>
            <person name="Lucas S."/>
            <person name="Lapidus A."/>
            <person name="Barry K."/>
            <person name="Detter J.C."/>
            <person name="Glavina del Rio T."/>
            <person name="Hammon N."/>
            <person name="Israni S."/>
            <person name="Pitluck S."/>
            <person name="Brettin T."/>
            <person name="Bruce D."/>
            <person name="Han C."/>
            <person name="Tapia R."/>
            <person name="Gilna P."/>
            <person name="Kiss H."/>
            <person name="Schmutz J."/>
            <person name="Larimer F."/>
            <person name="Land M."/>
            <person name="Kyrpides N."/>
            <person name="Ivanova N."/>
            <person name="Richardson P."/>
        </authorList>
    </citation>
    <scope>NUCLEOTIDE SEQUENCE [LARGE SCALE GENOMIC DNA]</scope>
    <source>
        <strain>ATCC BAA-621 / DSM 15236 / T118</strain>
    </source>
</reference>
<comment type="function">
    <text evidence="1">Catalyzes the transfer of the phosphoribosyl group of 5-phosphorylribose-1-pyrophosphate (PRPP) to anthranilate to yield N-(5'-phosphoribosyl)-anthranilate (PRA).</text>
</comment>
<comment type="catalytic activity">
    <reaction evidence="1">
        <text>N-(5-phospho-beta-D-ribosyl)anthranilate + diphosphate = 5-phospho-alpha-D-ribose 1-diphosphate + anthranilate</text>
        <dbReference type="Rhea" id="RHEA:11768"/>
        <dbReference type="ChEBI" id="CHEBI:16567"/>
        <dbReference type="ChEBI" id="CHEBI:18277"/>
        <dbReference type="ChEBI" id="CHEBI:33019"/>
        <dbReference type="ChEBI" id="CHEBI:58017"/>
        <dbReference type="EC" id="2.4.2.18"/>
    </reaction>
</comment>
<comment type="cofactor">
    <cofactor evidence="1">
        <name>Mg(2+)</name>
        <dbReference type="ChEBI" id="CHEBI:18420"/>
    </cofactor>
    <text evidence="1">Binds 2 magnesium ions per monomer.</text>
</comment>
<comment type="pathway">
    <text evidence="1">Amino-acid biosynthesis; L-tryptophan biosynthesis; L-tryptophan from chorismate: step 2/5.</text>
</comment>
<comment type="subunit">
    <text evidence="1">Homodimer.</text>
</comment>
<comment type="similarity">
    <text evidence="1">Belongs to the anthranilate phosphoribosyltransferase family.</text>
</comment>
<proteinExistence type="inferred from homology"/>
<dbReference type="EC" id="2.4.2.18" evidence="1"/>
<dbReference type="EMBL" id="CP000267">
    <property type="protein sequence ID" value="ABD71306.1"/>
    <property type="molecule type" value="Genomic_DNA"/>
</dbReference>
<dbReference type="RefSeq" id="WP_011465869.1">
    <property type="nucleotide sequence ID" value="NC_007908.1"/>
</dbReference>
<dbReference type="SMR" id="Q21SE7"/>
<dbReference type="STRING" id="338969.Rfer_3602"/>
<dbReference type="KEGG" id="rfr:Rfer_3602"/>
<dbReference type="eggNOG" id="COG0547">
    <property type="taxonomic scope" value="Bacteria"/>
</dbReference>
<dbReference type="HOGENOM" id="CLU_034315_2_1_4"/>
<dbReference type="OrthoDB" id="9806430at2"/>
<dbReference type="UniPathway" id="UPA00035">
    <property type="reaction ID" value="UER00041"/>
</dbReference>
<dbReference type="Proteomes" id="UP000008332">
    <property type="component" value="Chromosome"/>
</dbReference>
<dbReference type="GO" id="GO:0005829">
    <property type="term" value="C:cytosol"/>
    <property type="evidence" value="ECO:0007669"/>
    <property type="project" value="TreeGrafter"/>
</dbReference>
<dbReference type="GO" id="GO:0004048">
    <property type="term" value="F:anthranilate phosphoribosyltransferase activity"/>
    <property type="evidence" value="ECO:0007669"/>
    <property type="project" value="UniProtKB-UniRule"/>
</dbReference>
<dbReference type="GO" id="GO:0000287">
    <property type="term" value="F:magnesium ion binding"/>
    <property type="evidence" value="ECO:0007669"/>
    <property type="project" value="UniProtKB-UniRule"/>
</dbReference>
<dbReference type="GO" id="GO:0000162">
    <property type="term" value="P:L-tryptophan biosynthetic process"/>
    <property type="evidence" value="ECO:0007669"/>
    <property type="project" value="UniProtKB-UniRule"/>
</dbReference>
<dbReference type="FunFam" id="1.20.970.10:FF:000006">
    <property type="entry name" value="Anthranilate phosphoribosyltransferase"/>
    <property type="match status" value="1"/>
</dbReference>
<dbReference type="FunFam" id="3.40.1030.10:FF:000002">
    <property type="entry name" value="Anthranilate phosphoribosyltransferase"/>
    <property type="match status" value="1"/>
</dbReference>
<dbReference type="Gene3D" id="3.40.1030.10">
    <property type="entry name" value="Nucleoside phosphorylase/phosphoribosyltransferase catalytic domain"/>
    <property type="match status" value="1"/>
</dbReference>
<dbReference type="Gene3D" id="1.20.970.10">
    <property type="entry name" value="Transferase, Pyrimidine Nucleoside Phosphorylase, Chain C"/>
    <property type="match status" value="1"/>
</dbReference>
<dbReference type="HAMAP" id="MF_00211">
    <property type="entry name" value="TrpD"/>
    <property type="match status" value="1"/>
</dbReference>
<dbReference type="InterPro" id="IPR005940">
    <property type="entry name" value="Anthranilate_Pribosyl_Tfrase"/>
</dbReference>
<dbReference type="InterPro" id="IPR000312">
    <property type="entry name" value="Glycosyl_Trfase_fam3"/>
</dbReference>
<dbReference type="InterPro" id="IPR017459">
    <property type="entry name" value="Glycosyl_Trfase_fam3_N_dom"/>
</dbReference>
<dbReference type="InterPro" id="IPR036320">
    <property type="entry name" value="Glycosyl_Trfase_fam3_N_dom_sf"/>
</dbReference>
<dbReference type="InterPro" id="IPR035902">
    <property type="entry name" value="Nuc_phospho_transferase"/>
</dbReference>
<dbReference type="NCBIfam" id="TIGR01245">
    <property type="entry name" value="trpD"/>
    <property type="match status" value="1"/>
</dbReference>
<dbReference type="PANTHER" id="PTHR43285">
    <property type="entry name" value="ANTHRANILATE PHOSPHORIBOSYLTRANSFERASE"/>
    <property type="match status" value="1"/>
</dbReference>
<dbReference type="PANTHER" id="PTHR43285:SF2">
    <property type="entry name" value="ANTHRANILATE PHOSPHORIBOSYLTRANSFERASE"/>
    <property type="match status" value="1"/>
</dbReference>
<dbReference type="Pfam" id="PF02885">
    <property type="entry name" value="Glycos_trans_3N"/>
    <property type="match status" value="1"/>
</dbReference>
<dbReference type="Pfam" id="PF00591">
    <property type="entry name" value="Glycos_transf_3"/>
    <property type="match status" value="1"/>
</dbReference>
<dbReference type="SUPFAM" id="SSF52418">
    <property type="entry name" value="Nucleoside phosphorylase/phosphoribosyltransferase catalytic domain"/>
    <property type="match status" value="1"/>
</dbReference>
<dbReference type="SUPFAM" id="SSF47648">
    <property type="entry name" value="Nucleoside phosphorylase/phosphoribosyltransferase N-terminal domain"/>
    <property type="match status" value="1"/>
</dbReference>
<feature type="chain" id="PRO_0000325455" description="Anthranilate phosphoribosyltransferase">
    <location>
        <begin position="1"/>
        <end position="350"/>
    </location>
</feature>
<feature type="binding site" evidence="1">
    <location>
        <position position="88"/>
    </location>
    <ligand>
        <name>5-phospho-alpha-D-ribose 1-diphosphate</name>
        <dbReference type="ChEBI" id="CHEBI:58017"/>
    </ligand>
</feature>
<feature type="binding site" evidence="1">
    <location>
        <position position="88"/>
    </location>
    <ligand>
        <name>anthranilate</name>
        <dbReference type="ChEBI" id="CHEBI:16567"/>
        <label>1</label>
    </ligand>
</feature>
<feature type="binding site" evidence="1">
    <location>
        <begin position="91"/>
        <end position="92"/>
    </location>
    <ligand>
        <name>5-phospho-alpha-D-ribose 1-diphosphate</name>
        <dbReference type="ChEBI" id="CHEBI:58017"/>
    </ligand>
</feature>
<feature type="binding site" evidence="1">
    <location>
        <position position="96"/>
    </location>
    <ligand>
        <name>5-phospho-alpha-D-ribose 1-diphosphate</name>
        <dbReference type="ChEBI" id="CHEBI:58017"/>
    </ligand>
</feature>
<feature type="binding site" evidence="1">
    <location>
        <begin position="98"/>
        <end position="101"/>
    </location>
    <ligand>
        <name>5-phospho-alpha-D-ribose 1-diphosphate</name>
        <dbReference type="ChEBI" id="CHEBI:58017"/>
    </ligand>
</feature>
<feature type="binding site" evidence="1">
    <location>
        <position position="100"/>
    </location>
    <ligand>
        <name>Mg(2+)</name>
        <dbReference type="ChEBI" id="CHEBI:18420"/>
        <label>1</label>
    </ligand>
</feature>
<feature type="binding site" evidence="1">
    <location>
        <begin position="116"/>
        <end position="124"/>
    </location>
    <ligand>
        <name>5-phospho-alpha-D-ribose 1-diphosphate</name>
        <dbReference type="ChEBI" id="CHEBI:58017"/>
    </ligand>
</feature>
<feature type="binding site" evidence="1">
    <location>
        <position position="128"/>
    </location>
    <ligand>
        <name>5-phospho-alpha-D-ribose 1-diphosphate</name>
        <dbReference type="ChEBI" id="CHEBI:58017"/>
    </ligand>
</feature>
<feature type="binding site" evidence="1">
    <location>
        <position position="174"/>
    </location>
    <ligand>
        <name>anthranilate</name>
        <dbReference type="ChEBI" id="CHEBI:16567"/>
        <label>2</label>
    </ligand>
</feature>
<feature type="binding site" evidence="1">
    <location>
        <position position="233"/>
    </location>
    <ligand>
        <name>Mg(2+)</name>
        <dbReference type="ChEBI" id="CHEBI:18420"/>
        <label>2</label>
    </ligand>
</feature>
<feature type="binding site" evidence="1">
    <location>
        <position position="234"/>
    </location>
    <ligand>
        <name>Mg(2+)</name>
        <dbReference type="ChEBI" id="CHEBI:18420"/>
        <label>1</label>
    </ligand>
</feature>
<feature type="binding site" evidence="1">
    <location>
        <position position="234"/>
    </location>
    <ligand>
        <name>Mg(2+)</name>
        <dbReference type="ChEBI" id="CHEBI:18420"/>
        <label>2</label>
    </ligand>
</feature>